<comment type="function">
    <text evidence="1">Enables the bacterium to metabolize sucrose as a sole carbon source.</text>
</comment>
<comment type="catalytic activity">
    <reaction evidence="2">
        <text>Hydrolysis of terminal non-reducing beta-D-fructofuranoside residues in beta-D-fructofuranosides.</text>
        <dbReference type="EC" id="3.2.1.26"/>
    </reaction>
</comment>
<comment type="pathway">
    <text>Glycan biosynthesis; sucrose metabolism.</text>
</comment>
<comment type="subcellular location">
    <subcellularLocation>
        <location evidence="1">Cytoplasm</location>
    </subcellularLocation>
</comment>
<comment type="similarity">
    <text evidence="3">Belongs to the glycosyl hydrolase 32 family.</text>
</comment>
<sequence length="545" mass="62259">MSLFSIIKDCGGIHNIQRVLIPDSRIIIEIHEFELLSAEAKQQAYNLTLKQVTYQQTVIENKDEFGAQLLEIGQLISDQQRQDITPYTAPVECEFRPDWHISPPQGLLNDPNGFIYHQGQYHLFYQWYPYTCVHKDKYWAHLTSKDLVNWQWQPVALTPSDWFDSYGVFSGHAISQDDLLMLFYTGNVRIGEQRDRHTTQCLATSTDGIHFTKQGPVVPELPPGVTPHCRDPKVIRHNDRWLMLLGVQREDEIGRLAIYHSEDLKTWTFIALCGDELGDFGYMWECPDFFTLNQQDFIVIGPQGIRSPDKSHTAPHHNGIVKAQLETSGKALLSDFQPLDYGFDFYAPQSLETPDGRRIMCAWMGLPDEIDHPSADNGWVHQLTTMRELSYDNGALIQKPIKELATLRHTPIVLSKDETSFDLHSKAFELQVSMQWGSVLRLHQSESGYCEIRLDSASRRLYIDRSNTLIREGDTVREMSLAESDSVQLHIFSDTSSLEVFINEGEAVMSARVFTDKNSTQLSFDGDVQIQACWLLNKASAPFIS</sequence>
<proteinExistence type="inferred from homology"/>
<reference key="1">
    <citation type="journal article" date="2008" name="BMC Genomics">
        <title>Genomics of an extreme psychrophile, Psychromonas ingrahamii.</title>
        <authorList>
            <person name="Riley M."/>
            <person name="Staley J.T."/>
            <person name="Danchin A."/>
            <person name="Wang T.Z."/>
            <person name="Brettin T.S."/>
            <person name="Hauser L.J."/>
            <person name="Land M.L."/>
            <person name="Thompson L.S."/>
        </authorList>
    </citation>
    <scope>NUCLEOTIDE SEQUENCE [LARGE SCALE GENOMIC DNA]</scope>
    <source>
        <strain>DSM 17664 / CCUG 51855 / 37</strain>
    </source>
</reference>
<accession>A1STJ9</accession>
<organism>
    <name type="scientific">Psychromonas ingrahamii (strain DSM 17664 / CCUG 51855 / 37)</name>
    <dbReference type="NCBI Taxonomy" id="357804"/>
    <lineage>
        <taxon>Bacteria</taxon>
        <taxon>Pseudomonadati</taxon>
        <taxon>Pseudomonadota</taxon>
        <taxon>Gammaproteobacteria</taxon>
        <taxon>Alteromonadales</taxon>
        <taxon>Psychromonadaceae</taxon>
        <taxon>Psychromonas</taxon>
    </lineage>
</organism>
<gene>
    <name type="ordered locus">Ping_0974</name>
</gene>
<feature type="chain" id="PRO_0000341296" description="Probable sucrose-6-phosphate hydrolase">
    <location>
        <begin position="1"/>
        <end position="545"/>
    </location>
</feature>
<feature type="active site" evidence="2">
    <location>
        <position position="110"/>
    </location>
</feature>
<feature type="binding site" evidence="1">
    <location>
        <begin position="107"/>
        <end position="110"/>
    </location>
    <ligand>
        <name>substrate</name>
    </ligand>
</feature>
<feature type="binding site" evidence="1">
    <location>
        <position position="126"/>
    </location>
    <ligand>
        <name>substrate</name>
    </ligand>
</feature>
<feature type="binding site" evidence="1">
    <location>
        <begin position="169"/>
        <end position="170"/>
    </location>
    <ligand>
        <name>substrate</name>
    </ligand>
</feature>
<feature type="binding site" evidence="1">
    <location>
        <begin position="230"/>
        <end position="231"/>
    </location>
    <ligand>
        <name>substrate</name>
    </ligand>
</feature>
<feature type="binding site" evidence="1">
    <location>
        <position position="285"/>
    </location>
    <ligand>
        <name>substrate</name>
    </ligand>
</feature>
<keyword id="KW-0963">Cytoplasm</keyword>
<keyword id="KW-0326">Glycosidase</keyword>
<keyword id="KW-0378">Hydrolase</keyword>
<keyword id="KW-1185">Reference proteome</keyword>
<name>SCRB_PSYIN</name>
<protein>
    <recommendedName>
        <fullName>Probable sucrose-6-phosphate hydrolase</fullName>
        <shortName>Sucrase</shortName>
        <ecNumber>3.2.1.26</ecNumber>
    </recommendedName>
    <alternativeName>
        <fullName>Invertase</fullName>
    </alternativeName>
</protein>
<evidence type="ECO:0000250" key="1"/>
<evidence type="ECO:0000255" key="2">
    <source>
        <dbReference type="PROSITE-ProRule" id="PRU10067"/>
    </source>
</evidence>
<evidence type="ECO:0000305" key="3"/>
<dbReference type="EC" id="3.2.1.26"/>
<dbReference type="EMBL" id="CP000510">
    <property type="protein sequence ID" value="ABM02814.1"/>
    <property type="molecule type" value="Genomic_DNA"/>
</dbReference>
<dbReference type="RefSeq" id="WP_011769377.1">
    <property type="nucleotide sequence ID" value="NC_008709.1"/>
</dbReference>
<dbReference type="SMR" id="A1STJ9"/>
<dbReference type="STRING" id="357804.Ping_0974"/>
<dbReference type="CAZy" id="GH32">
    <property type="family name" value="Glycoside Hydrolase Family 32"/>
</dbReference>
<dbReference type="KEGG" id="pin:Ping_0974"/>
<dbReference type="eggNOG" id="COG1621">
    <property type="taxonomic scope" value="Bacteria"/>
</dbReference>
<dbReference type="HOGENOM" id="CLU_001528_7_1_6"/>
<dbReference type="OrthoDB" id="9801455at2"/>
<dbReference type="UniPathway" id="UPA00238"/>
<dbReference type="Proteomes" id="UP000000639">
    <property type="component" value="Chromosome"/>
</dbReference>
<dbReference type="GO" id="GO:0005737">
    <property type="term" value="C:cytoplasm"/>
    <property type="evidence" value="ECO:0007669"/>
    <property type="project" value="UniProtKB-SubCell"/>
</dbReference>
<dbReference type="GO" id="GO:0004564">
    <property type="term" value="F:beta-fructofuranosidase activity"/>
    <property type="evidence" value="ECO:0007669"/>
    <property type="project" value="UniProtKB-EC"/>
</dbReference>
<dbReference type="GO" id="GO:0005985">
    <property type="term" value="P:sucrose metabolic process"/>
    <property type="evidence" value="ECO:0007669"/>
    <property type="project" value="UniProtKB-UniPathway"/>
</dbReference>
<dbReference type="CDD" id="cd18623">
    <property type="entry name" value="GH32_ScrB-like"/>
    <property type="match status" value="1"/>
</dbReference>
<dbReference type="Gene3D" id="2.60.120.560">
    <property type="entry name" value="Exo-inulinase, domain 1"/>
    <property type="match status" value="1"/>
</dbReference>
<dbReference type="Gene3D" id="2.115.10.20">
    <property type="entry name" value="Glycosyl hydrolase domain, family 43"/>
    <property type="match status" value="1"/>
</dbReference>
<dbReference type="InterPro" id="IPR013320">
    <property type="entry name" value="ConA-like_dom_sf"/>
</dbReference>
<dbReference type="InterPro" id="IPR051214">
    <property type="entry name" value="GH32_Enzymes"/>
</dbReference>
<dbReference type="InterPro" id="IPR001362">
    <property type="entry name" value="Glyco_hydro_32"/>
</dbReference>
<dbReference type="InterPro" id="IPR018053">
    <property type="entry name" value="Glyco_hydro_32_AS"/>
</dbReference>
<dbReference type="InterPro" id="IPR013189">
    <property type="entry name" value="Glyco_hydro_32_C"/>
</dbReference>
<dbReference type="InterPro" id="IPR013148">
    <property type="entry name" value="Glyco_hydro_32_N"/>
</dbReference>
<dbReference type="InterPro" id="IPR023296">
    <property type="entry name" value="Glyco_hydro_beta-prop_sf"/>
</dbReference>
<dbReference type="InterPro" id="IPR006232">
    <property type="entry name" value="Suc6P_hydrolase"/>
</dbReference>
<dbReference type="NCBIfam" id="TIGR01322">
    <property type="entry name" value="scrB_fam"/>
    <property type="match status" value="1"/>
</dbReference>
<dbReference type="PANTHER" id="PTHR43101">
    <property type="entry name" value="BETA-FRUCTOSIDASE"/>
    <property type="match status" value="1"/>
</dbReference>
<dbReference type="PANTHER" id="PTHR43101:SF1">
    <property type="entry name" value="BETA-FRUCTOSIDASE"/>
    <property type="match status" value="1"/>
</dbReference>
<dbReference type="Pfam" id="PF08244">
    <property type="entry name" value="Glyco_hydro_32C"/>
    <property type="match status" value="1"/>
</dbReference>
<dbReference type="Pfam" id="PF00251">
    <property type="entry name" value="Glyco_hydro_32N"/>
    <property type="match status" value="1"/>
</dbReference>
<dbReference type="SMART" id="SM00640">
    <property type="entry name" value="Glyco_32"/>
    <property type="match status" value="1"/>
</dbReference>
<dbReference type="SUPFAM" id="SSF75005">
    <property type="entry name" value="Arabinanase/levansucrase/invertase"/>
    <property type="match status" value="1"/>
</dbReference>
<dbReference type="SUPFAM" id="SSF49899">
    <property type="entry name" value="Concanavalin A-like lectins/glucanases"/>
    <property type="match status" value="1"/>
</dbReference>
<dbReference type="PROSITE" id="PS00609">
    <property type="entry name" value="GLYCOSYL_HYDROL_F32"/>
    <property type="match status" value="1"/>
</dbReference>